<sequence length="46" mass="5849">MFMMNNNMFIMFMIMYNVMRVNITRCSRVMFTTFYMITNKYIYIFM</sequence>
<evidence type="ECO:0000305" key="1"/>
<protein>
    <recommendedName>
        <fullName>Putative uncharacterized protein Q0092, mitochondrial</fullName>
    </recommendedName>
</protein>
<name>Q0092_YEAST</name>
<dbReference type="EMBL" id="M11449">
    <property type="protein sequence ID" value="AAA32161.2"/>
    <property type="molecule type" value="Genomic_DNA"/>
</dbReference>
<dbReference type="EMBL" id="KP263414">
    <property type="status" value="NOT_ANNOTATED_CDS"/>
    <property type="molecule type" value="Genomic_DNA"/>
</dbReference>
<dbReference type="PIR" id="A23952">
    <property type="entry name" value="A23952"/>
</dbReference>
<dbReference type="STRING" id="4932.Q0092"/>
<dbReference type="PaxDb" id="4932-Q0092"/>
<dbReference type="EnsemblFungi" id="Q0092_mRNA">
    <property type="protein sequence ID" value="Q0092"/>
    <property type="gene ID" value="Q0092"/>
</dbReference>
<dbReference type="AGR" id="SGD:S000007269"/>
<dbReference type="SGD" id="S000007269">
    <property type="gene designation" value="Q0092"/>
</dbReference>
<dbReference type="HOGENOM" id="CLU_3191654_0_0_1"/>
<dbReference type="InParanoid" id="Q35811"/>
<dbReference type="Proteomes" id="UP000002311">
    <property type="component" value="Mitochondrion"/>
</dbReference>
<dbReference type="GO" id="GO:0005739">
    <property type="term" value="C:mitochondrion"/>
    <property type="evidence" value="ECO:0007669"/>
    <property type="project" value="UniProtKB-SubCell"/>
</dbReference>
<gene>
    <name type="ordered locus">Q0092</name>
    <name type="ORF">ORF5</name>
    <name type="ORF">ORI5</name>
</gene>
<geneLocation type="mitochondrion"/>
<reference key="1">
    <citation type="journal article" date="1985" name="Gene">
        <title>A new putative gene in the mitochondrial genome of Saccharomyces cerevisiae.</title>
        <authorList>
            <person name="Colin Y."/>
            <person name="Baldacci G."/>
            <person name="Bernardi G."/>
        </authorList>
    </citation>
    <scope>NUCLEOTIDE SEQUENCE [GENOMIC DNA]</scope>
    <source>
        <strain>B</strain>
    </source>
</reference>
<reference key="2">
    <citation type="journal article" date="1998" name="FEBS Lett.">
        <title>The complete sequence of the mitochondrial genome of Saccharomyces cerevisiae.</title>
        <authorList>
            <person name="Foury F."/>
            <person name="Roganti T."/>
            <person name="Lecrenier N."/>
            <person name="Purnelle B."/>
        </authorList>
    </citation>
    <scope>NUCLEOTIDE SEQUENCE [LARGE SCALE GENOMIC DNA]</scope>
    <source>
        <strain>ATCC 96604 / S288c / FY1679</strain>
    </source>
</reference>
<reference key="3">
    <citation type="journal article" date="2014" name="G3 (Bethesda)">
        <title>The reference genome sequence of Saccharomyces cerevisiae: Then and now.</title>
        <authorList>
            <person name="Engel S.R."/>
            <person name="Dietrich F.S."/>
            <person name="Fisk D.G."/>
            <person name="Binkley G."/>
            <person name="Balakrishnan R."/>
            <person name="Costanzo M.C."/>
            <person name="Dwight S.S."/>
            <person name="Hitz B.C."/>
            <person name="Karra K."/>
            <person name="Nash R.S."/>
            <person name="Weng S."/>
            <person name="Wong E.D."/>
            <person name="Lloyd P."/>
            <person name="Skrzypek M.S."/>
            <person name="Miyasato S.R."/>
            <person name="Simison M."/>
            <person name="Cherry J.M."/>
        </authorList>
    </citation>
    <scope>GENOME REANNOTATION</scope>
    <source>
        <strain>ATCC 96604 / S288c / FY1679</strain>
    </source>
</reference>
<feature type="chain" id="PRO_0000299681" description="Putative uncharacterized protein Q0092, mitochondrial">
    <location>
        <begin position="1"/>
        <end position="46"/>
    </location>
</feature>
<proteinExistence type="uncertain"/>
<keyword id="KW-0496">Mitochondrion</keyword>
<keyword id="KW-1185">Reference proteome</keyword>
<comment type="subcellular location">
    <subcellularLocation>
        <location evidence="1">Mitochondrion</location>
    </subcellularLocation>
</comment>
<comment type="caution">
    <text evidence="1">Product of a dubious gene prediction.</text>
</comment>
<organism>
    <name type="scientific">Saccharomyces cerevisiae (strain ATCC 204508 / S288c)</name>
    <name type="common">Baker's yeast</name>
    <dbReference type="NCBI Taxonomy" id="559292"/>
    <lineage>
        <taxon>Eukaryota</taxon>
        <taxon>Fungi</taxon>
        <taxon>Dikarya</taxon>
        <taxon>Ascomycota</taxon>
        <taxon>Saccharomycotina</taxon>
        <taxon>Saccharomycetes</taxon>
        <taxon>Saccharomycetales</taxon>
        <taxon>Saccharomycetaceae</taxon>
        <taxon>Saccharomyces</taxon>
    </lineage>
</organism>
<accession>Q35811</accession>